<reference key="1">
    <citation type="journal article" date="2005" name="Proc. Natl. Acad. Sci. U.S.A.">
        <title>Comparison of the complete genome sequences of Pseudomonas syringae pv. syringae B728a and pv. tomato DC3000.</title>
        <authorList>
            <person name="Feil H."/>
            <person name="Feil W.S."/>
            <person name="Chain P."/>
            <person name="Larimer F."/>
            <person name="Dibartolo G."/>
            <person name="Copeland A."/>
            <person name="Lykidis A."/>
            <person name="Trong S."/>
            <person name="Nolan M."/>
            <person name="Goltsman E."/>
            <person name="Thiel J."/>
            <person name="Malfatti S."/>
            <person name="Loper J.E."/>
            <person name="Lapidus A."/>
            <person name="Detter J.C."/>
            <person name="Land M."/>
            <person name="Richardson P.M."/>
            <person name="Kyrpides N.C."/>
            <person name="Ivanova N."/>
            <person name="Lindow S.E."/>
        </authorList>
    </citation>
    <scope>NUCLEOTIDE SEQUENCE [LARGE SCALE GENOMIC DNA]</scope>
    <source>
        <strain>B728a</strain>
    </source>
</reference>
<feature type="chain" id="PRO_0000270356" description="Methionine import ATP-binding protein MetN 1">
    <location>
        <begin position="1"/>
        <end position="335"/>
    </location>
</feature>
<feature type="domain" description="ABC transporter" evidence="1">
    <location>
        <begin position="2"/>
        <end position="242"/>
    </location>
</feature>
<feature type="binding site" evidence="1">
    <location>
        <begin position="38"/>
        <end position="45"/>
    </location>
    <ligand>
        <name>ATP</name>
        <dbReference type="ChEBI" id="CHEBI:30616"/>
    </ligand>
</feature>
<comment type="function">
    <text evidence="1">Part of the ABC transporter complex MetNIQ involved in methionine import. Responsible for energy coupling to the transport system.</text>
</comment>
<comment type="catalytic activity">
    <reaction evidence="1">
        <text>L-methionine(out) + ATP + H2O = L-methionine(in) + ADP + phosphate + H(+)</text>
        <dbReference type="Rhea" id="RHEA:29779"/>
        <dbReference type="ChEBI" id="CHEBI:15377"/>
        <dbReference type="ChEBI" id="CHEBI:15378"/>
        <dbReference type="ChEBI" id="CHEBI:30616"/>
        <dbReference type="ChEBI" id="CHEBI:43474"/>
        <dbReference type="ChEBI" id="CHEBI:57844"/>
        <dbReference type="ChEBI" id="CHEBI:456216"/>
        <dbReference type="EC" id="7.4.2.11"/>
    </reaction>
</comment>
<comment type="catalytic activity">
    <reaction evidence="1">
        <text>D-methionine(out) + ATP + H2O = D-methionine(in) + ADP + phosphate + H(+)</text>
        <dbReference type="Rhea" id="RHEA:29767"/>
        <dbReference type="ChEBI" id="CHEBI:15377"/>
        <dbReference type="ChEBI" id="CHEBI:15378"/>
        <dbReference type="ChEBI" id="CHEBI:30616"/>
        <dbReference type="ChEBI" id="CHEBI:43474"/>
        <dbReference type="ChEBI" id="CHEBI:57932"/>
        <dbReference type="ChEBI" id="CHEBI:456216"/>
        <dbReference type="EC" id="7.4.2.11"/>
    </reaction>
</comment>
<comment type="subunit">
    <text evidence="1">The complex is composed of two ATP-binding proteins (MetN), two transmembrane proteins (MetI) and a solute-binding protein (MetQ).</text>
</comment>
<comment type="subcellular location">
    <subcellularLocation>
        <location evidence="1">Cell inner membrane</location>
        <topology evidence="1">Peripheral membrane protein</topology>
    </subcellularLocation>
</comment>
<comment type="similarity">
    <text evidence="1">Belongs to the ABC transporter superfamily. Methionine importer (TC 3.A.1.24) family.</text>
</comment>
<sequence>MIEFHNVHKTYRVAGKEIPALHPTSLRVDSGQVFGIIGHSGAGKSTLLRLINRLETPSGGQIVVDGEDVTALDANGLRRFRQQVGMIFQHFNLLASRTVADNVAMPLTLAGDMPRKQIDQRVAELLERVGLSDHAKKYPAQLSGGQKQRVGIARALATKPKILLCDEATSALDPQTTASVLQLLAEINRELKLTIVLITHEMDVIRRVCDQVAVMDAGVIVEHGKVADVFLHPQHATTRRFVQEDEQIDENEQRDDFAHVQGRIVRLTFQGEATYAPLLGTVARETGVDYSILAGRIDRIKDTPYGQLTLAVTGGDMDAAFARFTAADVHMEVLR</sequence>
<proteinExistence type="inferred from homology"/>
<protein>
    <recommendedName>
        <fullName evidence="1">Methionine import ATP-binding protein MetN 1</fullName>
        <ecNumber evidence="1">7.4.2.11</ecNumber>
    </recommendedName>
</protein>
<dbReference type="EC" id="7.4.2.11" evidence="1"/>
<dbReference type="EMBL" id="CP000075">
    <property type="protein sequence ID" value="AAY35354.1"/>
    <property type="molecule type" value="Genomic_DNA"/>
</dbReference>
<dbReference type="RefSeq" id="WP_011266296.1">
    <property type="nucleotide sequence ID" value="NC_007005.1"/>
</dbReference>
<dbReference type="RefSeq" id="YP_233392.1">
    <property type="nucleotide sequence ID" value="NC_007005.1"/>
</dbReference>
<dbReference type="SMR" id="Q4ZZR8"/>
<dbReference type="STRING" id="205918.Psyr_0281"/>
<dbReference type="KEGG" id="psb:Psyr_0281"/>
<dbReference type="PATRIC" id="fig|205918.7.peg.283"/>
<dbReference type="eggNOG" id="COG1135">
    <property type="taxonomic scope" value="Bacteria"/>
</dbReference>
<dbReference type="HOGENOM" id="CLU_000604_1_3_6"/>
<dbReference type="OrthoDB" id="9802264at2"/>
<dbReference type="Proteomes" id="UP000000426">
    <property type="component" value="Chromosome"/>
</dbReference>
<dbReference type="GO" id="GO:0005886">
    <property type="term" value="C:plasma membrane"/>
    <property type="evidence" value="ECO:0007669"/>
    <property type="project" value="UniProtKB-SubCell"/>
</dbReference>
<dbReference type="GO" id="GO:0033232">
    <property type="term" value="F:ABC-type D-methionine transporter activity"/>
    <property type="evidence" value="ECO:0007669"/>
    <property type="project" value="UniProtKB-EC"/>
</dbReference>
<dbReference type="GO" id="GO:0005524">
    <property type="term" value="F:ATP binding"/>
    <property type="evidence" value="ECO:0007669"/>
    <property type="project" value="UniProtKB-KW"/>
</dbReference>
<dbReference type="GO" id="GO:0016887">
    <property type="term" value="F:ATP hydrolysis activity"/>
    <property type="evidence" value="ECO:0007669"/>
    <property type="project" value="InterPro"/>
</dbReference>
<dbReference type="CDD" id="cd03258">
    <property type="entry name" value="ABC_MetN_methionine_transporter"/>
    <property type="match status" value="1"/>
</dbReference>
<dbReference type="FunFam" id="3.40.50.300:FF:000056">
    <property type="entry name" value="Cell division ATP-binding protein FtsE"/>
    <property type="match status" value="1"/>
</dbReference>
<dbReference type="FunFam" id="3.30.70.260:FF:000038">
    <property type="entry name" value="Methionine import ATP-binding protein MetN"/>
    <property type="match status" value="1"/>
</dbReference>
<dbReference type="Gene3D" id="3.30.70.260">
    <property type="match status" value="1"/>
</dbReference>
<dbReference type="Gene3D" id="3.40.50.300">
    <property type="entry name" value="P-loop containing nucleotide triphosphate hydrolases"/>
    <property type="match status" value="1"/>
</dbReference>
<dbReference type="InterPro" id="IPR003593">
    <property type="entry name" value="AAA+_ATPase"/>
</dbReference>
<dbReference type="InterPro" id="IPR003439">
    <property type="entry name" value="ABC_transporter-like_ATP-bd"/>
</dbReference>
<dbReference type="InterPro" id="IPR017871">
    <property type="entry name" value="ABC_transporter-like_CS"/>
</dbReference>
<dbReference type="InterPro" id="IPR045865">
    <property type="entry name" value="ACT-like_dom_sf"/>
</dbReference>
<dbReference type="InterPro" id="IPR041701">
    <property type="entry name" value="MetN_ABC"/>
</dbReference>
<dbReference type="InterPro" id="IPR050086">
    <property type="entry name" value="MetN_ABC_transporter-like"/>
</dbReference>
<dbReference type="InterPro" id="IPR018449">
    <property type="entry name" value="NIL_domain"/>
</dbReference>
<dbReference type="InterPro" id="IPR027417">
    <property type="entry name" value="P-loop_NTPase"/>
</dbReference>
<dbReference type="PANTHER" id="PTHR43166">
    <property type="entry name" value="AMINO ACID IMPORT ATP-BINDING PROTEIN"/>
    <property type="match status" value="1"/>
</dbReference>
<dbReference type="PANTHER" id="PTHR43166:SF30">
    <property type="entry name" value="METHIONINE IMPORT ATP-BINDING PROTEIN METN"/>
    <property type="match status" value="1"/>
</dbReference>
<dbReference type="Pfam" id="PF00005">
    <property type="entry name" value="ABC_tran"/>
    <property type="match status" value="1"/>
</dbReference>
<dbReference type="Pfam" id="PF09383">
    <property type="entry name" value="NIL"/>
    <property type="match status" value="1"/>
</dbReference>
<dbReference type="SMART" id="SM00382">
    <property type="entry name" value="AAA"/>
    <property type="match status" value="1"/>
</dbReference>
<dbReference type="SMART" id="SM00930">
    <property type="entry name" value="NIL"/>
    <property type="match status" value="1"/>
</dbReference>
<dbReference type="SUPFAM" id="SSF55021">
    <property type="entry name" value="ACT-like"/>
    <property type="match status" value="1"/>
</dbReference>
<dbReference type="SUPFAM" id="SSF52540">
    <property type="entry name" value="P-loop containing nucleoside triphosphate hydrolases"/>
    <property type="match status" value="1"/>
</dbReference>
<dbReference type="PROSITE" id="PS00211">
    <property type="entry name" value="ABC_TRANSPORTER_1"/>
    <property type="match status" value="1"/>
</dbReference>
<dbReference type="PROSITE" id="PS50893">
    <property type="entry name" value="ABC_TRANSPORTER_2"/>
    <property type="match status" value="1"/>
</dbReference>
<dbReference type="PROSITE" id="PS51264">
    <property type="entry name" value="METN"/>
    <property type="match status" value="1"/>
</dbReference>
<evidence type="ECO:0000255" key="1">
    <source>
        <dbReference type="HAMAP-Rule" id="MF_01719"/>
    </source>
</evidence>
<keyword id="KW-0029">Amino-acid transport</keyword>
<keyword id="KW-0067">ATP-binding</keyword>
<keyword id="KW-0997">Cell inner membrane</keyword>
<keyword id="KW-1003">Cell membrane</keyword>
<keyword id="KW-0472">Membrane</keyword>
<keyword id="KW-0547">Nucleotide-binding</keyword>
<keyword id="KW-1278">Translocase</keyword>
<keyword id="KW-0813">Transport</keyword>
<accession>Q4ZZR8</accession>
<gene>
    <name evidence="1" type="primary">metN1</name>
    <name type="ordered locus">Psyr_0281</name>
</gene>
<organism>
    <name type="scientific">Pseudomonas syringae pv. syringae (strain B728a)</name>
    <dbReference type="NCBI Taxonomy" id="205918"/>
    <lineage>
        <taxon>Bacteria</taxon>
        <taxon>Pseudomonadati</taxon>
        <taxon>Pseudomonadota</taxon>
        <taxon>Gammaproteobacteria</taxon>
        <taxon>Pseudomonadales</taxon>
        <taxon>Pseudomonadaceae</taxon>
        <taxon>Pseudomonas</taxon>
        <taxon>Pseudomonas syringae</taxon>
    </lineage>
</organism>
<name>METN1_PSEU2</name>